<reference key="1">
    <citation type="journal article" date="2011" name="Stand. Genomic Sci.">
        <title>Complete genome sequence of 'Thioalkalivibrio sulfidophilus' HL-EbGr7.</title>
        <authorList>
            <person name="Muyzer G."/>
            <person name="Sorokin D.Y."/>
            <person name="Mavromatis K."/>
            <person name="Lapidus A."/>
            <person name="Clum A."/>
            <person name="Ivanova N."/>
            <person name="Pati A."/>
            <person name="d'Haeseleer P."/>
            <person name="Woyke T."/>
            <person name="Kyrpides N.C."/>
        </authorList>
    </citation>
    <scope>NUCLEOTIDE SEQUENCE [LARGE SCALE GENOMIC DNA]</scope>
    <source>
        <strain>HL-EbGR7</strain>
    </source>
</reference>
<organism>
    <name type="scientific">Thioalkalivibrio sulfidiphilus (strain HL-EbGR7)</name>
    <dbReference type="NCBI Taxonomy" id="396588"/>
    <lineage>
        <taxon>Bacteria</taxon>
        <taxon>Pseudomonadati</taxon>
        <taxon>Pseudomonadota</taxon>
        <taxon>Gammaproteobacteria</taxon>
        <taxon>Chromatiales</taxon>
        <taxon>Ectothiorhodospiraceae</taxon>
        <taxon>Thioalkalivibrio</taxon>
    </lineage>
</organism>
<proteinExistence type="inferred from homology"/>
<comment type="function">
    <text evidence="1">One of two assembly initiator proteins, it binds directly to the 5'-end of the 23S rRNA, where it nucleates assembly of the 50S subunit.</text>
</comment>
<comment type="function">
    <text evidence="1">One of the proteins that surrounds the polypeptide exit tunnel on the outside of the subunit.</text>
</comment>
<comment type="subunit">
    <text evidence="1">Part of the 50S ribosomal subunit.</text>
</comment>
<comment type="similarity">
    <text evidence="1">Belongs to the universal ribosomal protein uL24 family.</text>
</comment>
<name>RL24_THISH</name>
<feature type="chain" id="PRO_1000165972" description="Large ribosomal subunit protein uL24">
    <location>
        <begin position="1"/>
        <end position="105"/>
    </location>
</feature>
<dbReference type="EMBL" id="CP001339">
    <property type="protein sequence ID" value="ACL73393.1"/>
    <property type="molecule type" value="Genomic_DNA"/>
</dbReference>
<dbReference type="RefSeq" id="WP_012638869.1">
    <property type="nucleotide sequence ID" value="NC_011901.1"/>
</dbReference>
<dbReference type="SMR" id="B8GV47"/>
<dbReference type="STRING" id="396588.Tgr7_2313"/>
<dbReference type="KEGG" id="tgr:Tgr7_2313"/>
<dbReference type="eggNOG" id="COG0198">
    <property type="taxonomic scope" value="Bacteria"/>
</dbReference>
<dbReference type="HOGENOM" id="CLU_093315_2_2_6"/>
<dbReference type="OrthoDB" id="9807419at2"/>
<dbReference type="Proteomes" id="UP000002383">
    <property type="component" value="Chromosome"/>
</dbReference>
<dbReference type="GO" id="GO:1990904">
    <property type="term" value="C:ribonucleoprotein complex"/>
    <property type="evidence" value="ECO:0007669"/>
    <property type="project" value="UniProtKB-KW"/>
</dbReference>
<dbReference type="GO" id="GO:0005840">
    <property type="term" value="C:ribosome"/>
    <property type="evidence" value="ECO:0007669"/>
    <property type="project" value="UniProtKB-KW"/>
</dbReference>
<dbReference type="GO" id="GO:0019843">
    <property type="term" value="F:rRNA binding"/>
    <property type="evidence" value="ECO:0007669"/>
    <property type="project" value="UniProtKB-UniRule"/>
</dbReference>
<dbReference type="GO" id="GO:0003735">
    <property type="term" value="F:structural constituent of ribosome"/>
    <property type="evidence" value="ECO:0007669"/>
    <property type="project" value="InterPro"/>
</dbReference>
<dbReference type="GO" id="GO:0006412">
    <property type="term" value="P:translation"/>
    <property type="evidence" value="ECO:0007669"/>
    <property type="project" value="UniProtKB-UniRule"/>
</dbReference>
<dbReference type="CDD" id="cd06089">
    <property type="entry name" value="KOW_RPL26"/>
    <property type="match status" value="1"/>
</dbReference>
<dbReference type="FunFam" id="2.30.30.30:FF:000004">
    <property type="entry name" value="50S ribosomal protein L24"/>
    <property type="match status" value="1"/>
</dbReference>
<dbReference type="Gene3D" id="2.30.30.30">
    <property type="match status" value="1"/>
</dbReference>
<dbReference type="HAMAP" id="MF_01326_B">
    <property type="entry name" value="Ribosomal_uL24_B"/>
    <property type="match status" value="1"/>
</dbReference>
<dbReference type="InterPro" id="IPR005824">
    <property type="entry name" value="KOW"/>
</dbReference>
<dbReference type="InterPro" id="IPR014722">
    <property type="entry name" value="Rib_uL2_dom2"/>
</dbReference>
<dbReference type="InterPro" id="IPR003256">
    <property type="entry name" value="Ribosomal_uL24"/>
</dbReference>
<dbReference type="InterPro" id="IPR041988">
    <property type="entry name" value="Ribosomal_uL24_KOW"/>
</dbReference>
<dbReference type="InterPro" id="IPR008991">
    <property type="entry name" value="Translation_prot_SH3-like_sf"/>
</dbReference>
<dbReference type="NCBIfam" id="TIGR01079">
    <property type="entry name" value="rplX_bact"/>
    <property type="match status" value="1"/>
</dbReference>
<dbReference type="PANTHER" id="PTHR12903">
    <property type="entry name" value="MITOCHONDRIAL RIBOSOMAL PROTEIN L24"/>
    <property type="match status" value="1"/>
</dbReference>
<dbReference type="Pfam" id="PF00467">
    <property type="entry name" value="KOW"/>
    <property type="match status" value="1"/>
</dbReference>
<dbReference type="Pfam" id="PF17136">
    <property type="entry name" value="ribosomal_L24"/>
    <property type="match status" value="1"/>
</dbReference>
<dbReference type="SMART" id="SM00739">
    <property type="entry name" value="KOW"/>
    <property type="match status" value="1"/>
</dbReference>
<dbReference type="SUPFAM" id="SSF50104">
    <property type="entry name" value="Translation proteins SH3-like domain"/>
    <property type="match status" value="1"/>
</dbReference>
<keyword id="KW-1185">Reference proteome</keyword>
<keyword id="KW-0687">Ribonucleoprotein</keyword>
<keyword id="KW-0689">Ribosomal protein</keyword>
<keyword id="KW-0694">RNA-binding</keyword>
<keyword id="KW-0699">rRNA-binding</keyword>
<evidence type="ECO:0000255" key="1">
    <source>
        <dbReference type="HAMAP-Rule" id="MF_01326"/>
    </source>
</evidence>
<evidence type="ECO:0000305" key="2"/>
<sequence>MQRIKQGDDVIVTAGKDKGRRGTVVKVLTDDRVVVQNINMVKKHQKPNPTAGQPGGIIDKEMPIHVSNVMLFNPAKGKGDRVGFKTLEDGRKVRYFKSDNEVVDA</sequence>
<gene>
    <name evidence="1" type="primary">rplX</name>
    <name type="ordered locus">Tgr7_2313</name>
</gene>
<accession>B8GV47</accession>
<protein>
    <recommendedName>
        <fullName evidence="1">Large ribosomal subunit protein uL24</fullName>
    </recommendedName>
    <alternativeName>
        <fullName evidence="2">50S ribosomal protein L24</fullName>
    </alternativeName>
</protein>